<accession>B1KKJ3</accession>
<sequence>MAKQIQAIRGMNDILPTQSPLWQKLETVLRETVAAYGYSEIRTPIVESTDLFKRSIGEVTDIVEKEMYTFDDRNGDSLTLRPEGTASTVRAGNEHGLLYNQEQRLWYMGPMFRHERPQKGRYRQFNQFGVEVYGIGTADVDAEVLMLSARLWEKLGIKEHVTLELNTLGDPAERATYRSALIEFLEQFKEQLDEESQRRMYTNPLRVLDTKNPEVQALLVDAPELMDFLGEESRAHFSHLCELLDAVGIQYVINPRLVRGLDYYNRTVFEWVTSSLGSQGTVLAGGRYDGLVEQLGGKDTPAVGFAMGLERIVLLLETLELTSDIPSTVDVYVTAMGDTSKIEAIKIAQTLRSELPNLRVMSHCGGGNFKKQMKRADKSGAQIALVIGEDELANNQVAVKYLREKKEQELVARDGLATYIAKQI</sequence>
<proteinExistence type="inferred from homology"/>
<name>SYH_SHEWM</name>
<evidence type="ECO:0000255" key="1">
    <source>
        <dbReference type="HAMAP-Rule" id="MF_00127"/>
    </source>
</evidence>
<gene>
    <name evidence="1" type="primary">hisS</name>
    <name type="ordered locus">Swoo_1545</name>
</gene>
<protein>
    <recommendedName>
        <fullName evidence="1">Histidine--tRNA ligase</fullName>
        <ecNumber evidence="1">6.1.1.21</ecNumber>
    </recommendedName>
    <alternativeName>
        <fullName evidence="1">Histidyl-tRNA synthetase</fullName>
        <shortName evidence="1">HisRS</shortName>
    </alternativeName>
</protein>
<organism>
    <name type="scientific">Shewanella woodyi (strain ATCC 51908 / MS32)</name>
    <dbReference type="NCBI Taxonomy" id="392500"/>
    <lineage>
        <taxon>Bacteria</taxon>
        <taxon>Pseudomonadati</taxon>
        <taxon>Pseudomonadota</taxon>
        <taxon>Gammaproteobacteria</taxon>
        <taxon>Alteromonadales</taxon>
        <taxon>Shewanellaceae</taxon>
        <taxon>Shewanella</taxon>
    </lineage>
</organism>
<keyword id="KW-0030">Aminoacyl-tRNA synthetase</keyword>
<keyword id="KW-0067">ATP-binding</keyword>
<keyword id="KW-0963">Cytoplasm</keyword>
<keyword id="KW-0436">Ligase</keyword>
<keyword id="KW-0547">Nucleotide-binding</keyword>
<keyword id="KW-0648">Protein biosynthesis</keyword>
<keyword id="KW-1185">Reference proteome</keyword>
<feature type="chain" id="PRO_1000095592" description="Histidine--tRNA ligase">
    <location>
        <begin position="1"/>
        <end position="424"/>
    </location>
</feature>
<comment type="catalytic activity">
    <reaction evidence="1">
        <text>tRNA(His) + L-histidine + ATP = L-histidyl-tRNA(His) + AMP + diphosphate + H(+)</text>
        <dbReference type="Rhea" id="RHEA:17313"/>
        <dbReference type="Rhea" id="RHEA-COMP:9665"/>
        <dbReference type="Rhea" id="RHEA-COMP:9689"/>
        <dbReference type="ChEBI" id="CHEBI:15378"/>
        <dbReference type="ChEBI" id="CHEBI:30616"/>
        <dbReference type="ChEBI" id="CHEBI:33019"/>
        <dbReference type="ChEBI" id="CHEBI:57595"/>
        <dbReference type="ChEBI" id="CHEBI:78442"/>
        <dbReference type="ChEBI" id="CHEBI:78527"/>
        <dbReference type="ChEBI" id="CHEBI:456215"/>
        <dbReference type="EC" id="6.1.1.21"/>
    </reaction>
</comment>
<comment type="subunit">
    <text evidence="1">Homodimer.</text>
</comment>
<comment type="subcellular location">
    <subcellularLocation>
        <location evidence="1">Cytoplasm</location>
    </subcellularLocation>
</comment>
<comment type="similarity">
    <text evidence="1">Belongs to the class-II aminoacyl-tRNA synthetase family.</text>
</comment>
<reference key="1">
    <citation type="submission" date="2008-02" db="EMBL/GenBank/DDBJ databases">
        <title>Complete sequence of Shewanella woodyi ATCC 51908.</title>
        <authorList>
            <consortium name="US DOE Joint Genome Institute"/>
            <person name="Copeland A."/>
            <person name="Lucas S."/>
            <person name="Lapidus A."/>
            <person name="Glavina del Rio T."/>
            <person name="Dalin E."/>
            <person name="Tice H."/>
            <person name="Bruce D."/>
            <person name="Goodwin L."/>
            <person name="Pitluck S."/>
            <person name="Sims D."/>
            <person name="Brettin T."/>
            <person name="Detter J.C."/>
            <person name="Han C."/>
            <person name="Kuske C.R."/>
            <person name="Schmutz J."/>
            <person name="Larimer F."/>
            <person name="Land M."/>
            <person name="Hauser L."/>
            <person name="Kyrpides N."/>
            <person name="Lykidis A."/>
            <person name="Zhao J.-S."/>
            <person name="Richardson P."/>
        </authorList>
    </citation>
    <scope>NUCLEOTIDE SEQUENCE [LARGE SCALE GENOMIC DNA]</scope>
    <source>
        <strain>ATCC 51908 / MS32</strain>
    </source>
</reference>
<dbReference type="EC" id="6.1.1.21" evidence="1"/>
<dbReference type="EMBL" id="CP000961">
    <property type="protein sequence ID" value="ACA85833.1"/>
    <property type="molecule type" value="Genomic_DNA"/>
</dbReference>
<dbReference type="RefSeq" id="WP_012324179.1">
    <property type="nucleotide sequence ID" value="NC_010506.1"/>
</dbReference>
<dbReference type="SMR" id="B1KKJ3"/>
<dbReference type="STRING" id="392500.Swoo_1545"/>
<dbReference type="KEGG" id="swd:Swoo_1545"/>
<dbReference type="eggNOG" id="COG0124">
    <property type="taxonomic scope" value="Bacteria"/>
</dbReference>
<dbReference type="HOGENOM" id="CLU_025113_1_1_6"/>
<dbReference type="Proteomes" id="UP000002168">
    <property type="component" value="Chromosome"/>
</dbReference>
<dbReference type="GO" id="GO:0005737">
    <property type="term" value="C:cytoplasm"/>
    <property type="evidence" value="ECO:0007669"/>
    <property type="project" value="UniProtKB-SubCell"/>
</dbReference>
<dbReference type="GO" id="GO:0005524">
    <property type="term" value="F:ATP binding"/>
    <property type="evidence" value="ECO:0007669"/>
    <property type="project" value="UniProtKB-UniRule"/>
</dbReference>
<dbReference type="GO" id="GO:0004821">
    <property type="term" value="F:histidine-tRNA ligase activity"/>
    <property type="evidence" value="ECO:0007669"/>
    <property type="project" value="UniProtKB-UniRule"/>
</dbReference>
<dbReference type="GO" id="GO:0006427">
    <property type="term" value="P:histidyl-tRNA aminoacylation"/>
    <property type="evidence" value="ECO:0007669"/>
    <property type="project" value="UniProtKB-UniRule"/>
</dbReference>
<dbReference type="CDD" id="cd00773">
    <property type="entry name" value="HisRS-like_core"/>
    <property type="match status" value="1"/>
</dbReference>
<dbReference type="CDD" id="cd00859">
    <property type="entry name" value="HisRS_anticodon"/>
    <property type="match status" value="1"/>
</dbReference>
<dbReference type="FunFam" id="3.30.930.10:FF:000005">
    <property type="entry name" value="Histidine--tRNA ligase"/>
    <property type="match status" value="1"/>
</dbReference>
<dbReference type="Gene3D" id="3.40.50.800">
    <property type="entry name" value="Anticodon-binding domain"/>
    <property type="match status" value="1"/>
</dbReference>
<dbReference type="Gene3D" id="3.30.930.10">
    <property type="entry name" value="Bira Bifunctional Protein, Domain 2"/>
    <property type="match status" value="1"/>
</dbReference>
<dbReference type="HAMAP" id="MF_00127">
    <property type="entry name" value="His_tRNA_synth"/>
    <property type="match status" value="1"/>
</dbReference>
<dbReference type="InterPro" id="IPR006195">
    <property type="entry name" value="aa-tRNA-synth_II"/>
</dbReference>
<dbReference type="InterPro" id="IPR045864">
    <property type="entry name" value="aa-tRNA-synth_II/BPL/LPL"/>
</dbReference>
<dbReference type="InterPro" id="IPR004154">
    <property type="entry name" value="Anticodon-bd"/>
</dbReference>
<dbReference type="InterPro" id="IPR036621">
    <property type="entry name" value="Anticodon-bd_dom_sf"/>
</dbReference>
<dbReference type="InterPro" id="IPR015807">
    <property type="entry name" value="His-tRNA-ligase"/>
</dbReference>
<dbReference type="InterPro" id="IPR041715">
    <property type="entry name" value="HisRS-like_core"/>
</dbReference>
<dbReference type="InterPro" id="IPR004516">
    <property type="entry name" value="HisRS/HisZ"/>
</dbReference>
<dbReference type="InterPro" id="IPR033656">
    <property type="entry name" value="HisRS_anticodon"/>
</dbReference>
<dbReference type="NCBIfam" id="TIGR00442">
    <property type="entry name" value="hisS"/>
    <property type="match status" value="1"/>
</dbReference>
<dbReference type="PANTHER" id="PTHR43707:SF1">
    <property type="entry name" value="HISTIDINE--TRNA LIGASE, MITOCHONDRIAL-RELATED"/>
    <property type="match status" value="1"/>
</dbReference>
<dbReference type="PANTHER" id="PTHR43707">
    <property type="entry name" value="HISTIDYL-TRNA SYNTHETASE"/>
    <property type="match status" value="1"/>
</dbReference>
<dbReference type="Pfam" id="PF03129">
    <property type="entry name" value="HGTP_anticodon"/>
    <property type="match status" value="1"/>
</dbReference>
<dbReference type="Pfam" id="PF13393">
    <property type="entry name" value="tRNA-synt_His"/>
    <property type="match status" value="1"/>
</dbReference>
<dbReference type="PIRSF" id="PIRSF001549">
    <property type="entry name" value="His-tRNA_synth"/>
    <property type="match status" value="1"/>
</dbReference>
<dbReference type="SUPFAM" id="SSF52954">
    <property type="entry name" value="Class II aaRS ABD-related"/>
    <property type="match status" value="1"/>
</dbReference>
<dbReference type="SUPFAM" id="SSF55681">
    <property type="entry name" value="Class II aaRS and biotin synthetases"/>
    <property type="match status" value="1"/>
</dbReference>
<dbReference type="PROSITE" id="PS50862">
    <property type="entry name" value="AA_TRNA_LIGASE_II"/>
    <property type="match status" value="1"/>
</dbReference>